<evidence type="ECO:0000250" key="1">
    <source>
        <dbReference type="UniProtKB" id="Q04571"/>
    </source>
</evidence>
<evidence type="ECO:0000255" key="2"/>
<evidence type="ECO:0000269" key="3">
    <source>
    </source>
</evidence>
<evidence type="ECO:0000269" key="4">
    <source>
    </source>
</evidence>
<evidence type="ECO:0000303" key="5">
    <source>
    </source>
</evidence>
<evidence type="ECO:0000305" key="6"/>
<organism>
    <name type="scientific">Lentinula edodes</name>
    <name type="common">Shiitake mushroom</name>
    <name type="synonym">Lentinus edodes</name>
    <dbReference type="NCBI Taxonomy" id="5353"/>
    <lineage>
        <taxon>Eukaryota</taxon>
        <taxon>Fungi</taxon>
        <taxon>Dikarya</taxon>
        <taxon>Basidiomycota</taxon>
        <taxon>Agaricomycotina</taxon>
        <taxon>Agaricomycetes</taxon>
        <taxon>Agaricomycetidae</taxon>
        <taxon>Agaricales</taxon>
        <taxon>Marasmiineae</taxon>
        <taxon>Omphalotaceae</taxon>
        <taxon>Lentinula</taxon>
    </lineage>
</organism>
<name>HYD2_LENED</name>
<sequence length="109" mass="10696">MQFKLAFVSIALATLAVATPAPRGEPASSCSTGDLQCCNTVEPASSPSASTILGLLGIVIQGVDVLVGLTCSPITVIGLESGGCSAQAVCCTDNSNGGLISIGCLPVTL</sequence>
<reference key="1">
    <citation type="journal article" date="2000" name="FEMS Microbiol. Lett.">
        <title>Cloning and characterization of two hydrophobin genes differentially expressed during fruit body development in Lentinula edodes.</title>
        <authorList>
            <person name="Ng W.L."/>
            <person name="Ng T.P."/>
            <person name="Kwan H.S."/>
        </authorList>
    </citation>
    <scope>NUCLEOTIDE SEQUENCE [GENOMIC DNA / MRNA]</scope>
    <scope>DEVELOPMENTAL STAGE</scope>
</reference>
<reference key="2">
    <citation type="journal article" date="2017" name="Appl. Environ. Microbiol.">
        <title>Lentinula edodes genome survey and postharvest transcriptome analysis.</title>
        <authorList>
            <person name="Sakamoto Y."/>
            <person name="Nakade K."/>
            <person name="Sato S."/>
            <person name="Yoshida K."/>
            <person name="Miyazaki K."/>
            <person name="Natsume S."/>
            <person name="Konno N."/>
        </authorList>
    </citation>
    <scope>NUCLEOTIDE SEQUENCE [LARGE SCALE GENOMIC DNA]</scope>
    <source>
        <strain>NBRC 111202</strain>
    </source>
</reference>
<accession>Q9P8S9</accession>
<gene>
    <name evidence="5" type="primary">hyd2</name>
    <name type="ORF">LENED_012872</name>
</gene>
<keyword id="KW-0134">Cell wall</keyword>
<keyword id="KW-1015">Disulfide bond</keyword>
<keyword id="KW-1185">Reference proteome</keyword>
<keyword id="KW-0964">Secreted</keyword>
<keyword id="KW-0732">Signal</keyword>
<protein>
    <recommendedName>
        <fullName evidence="5">Class I hydrophobin 2</fullName>
    </recommendedName>
</protein>
<comment type="function">
    <text evidence="3 6">Aerial growth, conidiation, and dispersal of filamentous fungi in the environment rely upon a capability of their secreting small amphipathic proteins called hydrophobins (HPBs) with low sequence identity. Class I can self-assemble into an outermost layer of rodlet bundles on aerial cell surfaces, conferring cellular hydrophobicity that supports fungal growth, development and dispersal; whereas Class II form highly ordered films at water-air interfaces through intermolecular interactions but contribute nothing to the rodlet structure (Probable). Hyd2 is a class I hydrophobin that may allow the dikaryotic mycelia to attach to the hydrophobic surface of the substrate (PubMed:10754238). Higher expression in dikaryotic mycelia than in monokaryotic mycelia indicates that dikaryons require more hyd2 hydrophobin than the monokaryons, presumably for a higher rate of hyphal growth (PubMed:10754238).</text>
</comment>
<comment type="subunit">
    <text evidence="1">Self-assembles to form functional amyloid fibrils called rodlets. Self-assembly into fibrillar rodlets occurs spontaneously at hydrophobic:hydrophilic interfaces and the rodlets further associate laterally to form amphipathic monolayers.</text>
</comment>
<comment type="subcellular location">
    <subcellularLocation>
        <location evidence="1">Secreted</location>
    </subcellularLocation>
    <subcellularLocation>
        <location evidence="1">Secreted</location>
        <location evidence="1">Cell wall</location>
    </subcellularLocation>
</comment>
<comment type="developmental stage">
    <text evidence="4">The transcript level is high in dikaryotic mycelial tissues.</text>
</comment>
<comment type="similarity">
    <text evidence="6">Belongs to the fungal hydrophobin family.</text>
</comment>
<feature type="signal peptide" evidence="2">
    <location>
        <begin position="1"/>
        <end position="18"/>
    </location>
</feature>
<feature type="chain" id="PRO_5013983888" description="Class I hydrophobin 2" evidence="2">
    <location>
        <begin position="19"/>
        <end position="109"/>
    </location>
</feature>
<feature type="disulfide bond" evidence="1">
    <location>
        <begin position="30"/>
        <end position="90"/>
    </location>
</feature>
<feature type="disulfide bond" evidence="1">
    <location>
        <begin position="37"/>
        <end position="84"/>
    </location>
</feature>
<feature type="disulfide bond" evidence="1">
    <location>
        <begin position="38"/>
        <end position="71"/>
    </location>
</feature>
<feature type="disulfide bond" evidence="1">
    <location>
        <begin position="91"/>
        <end position="104"/>
    </location>
</feature>
<proteinExistence type="evidence at transcript level"/>
<dbReference type="EMBL" id="AF217808">
    <property type="protein sequence ID" value="AAF61066.1"/>
    <property type="molecule type" value="Genomic_DNA"/>
</dbReference>
<dbReference type="EMBL" id="AF176648">
    <property type="protein sequence ID" value="AAG00901.1"/>
    <property type="molecule type" value="mRNA"/>
</dbReference>
<dbReference type="EMBL" id="BDGU01001890">
    <property type="protein sequence ID" value="GAW10588.1"/>
    <property type="molecule type" value="Genomic_DNA"/>
</dbReference>
<dbReference type="STRING" id="5353.Q9P8S9"/>
<dbReference type="OrthoDB" id="4225815at2759"/>
<dbReference type="Proteomes" id="UP000188533">
    <property type="component" value="Unassembled WGS sequence"/>
</dbReference>
<dbReference type="GO" id="GO:0005576">
    <property type="term" value="C:extracellular region"/>
    <property type="evidence" value="ECO:0007669"/>
    <property type="project" value="UniProtKB-KW"/>
</dbReference>
<dbReference type="GO" id="GO:0009277">
    <property type="term" value="C:fungal-type cell wall"/>
    <property type="evidence" value="ECO:0007669"/>
    <property type="project" value="InterPro"/>
</dbReference>
<dbReference type="GO" id="GO:0005199">
    <property type="term" value="F:structural constituent of cell wall"/>
    <property type="evidence" value="ECO:0007669"/>
    <property type="project" value="InterPro"/>
</dbReference>
<dbReference type="CDD" id="cd23507">
    <property type="entry name" value="hydrophobin_I"/>
    <property type="match status" value="1"/>
</dbReference>
<dbReference type="InterPro" id="IPR001338">
    <property type="entry name" value="Hydrophobin"/>
</dbReference>
<dbReference type="Pfam" id="PF01185">
    <property type="entry name" value="Hydrophobin"/>
    <property type="match status" value="1"/>
</dbReference>
<dbReference type="SMART" id="SM00075">
    <property type="entry name" value="HYDRO"/>
    <property type="match status" value="1"/>
</dbReference>